<protein>
    <recommendedName>
        <fullName evidence="5">Sterol 3-beta-glucosyltransferase</fullName>
        <ecNumber evidence="1">2.4.1.-</ecNumber>
        <ecNumber evidence="1">2.4.1.173</ecNumber>
    </recommendedName>
    <alternativeName>
        <fullName evidence="1">Autophagy-related protein 26</fullName>
    </alternativeName>
</protein>
<reference key="1">
    <citation type="journal article" date="2005" name="Science">
        <title>The genome of the basidiomycetous yeast and human pathogen Cryptococcus neoformans.</title>
        <authorList>
            <person name="Loftus B.J."/>
            <person name="Fung E."/>
            <person name="Roncaglia P."/>
            <person name="Rowley D."/>
            <person name="Amedeo P."/>
            <person name="Bruno D."/>
            <person name="Vamathevan J."/>
            <person name="Miranda M."/>
            <person name="Anderson I.J."/>
            <person name="Fraser J.A."/>
            <person name="Allen J.E."/>
            <person name="Bosdet I.E."/>
            <person name="Brent M.R."/>
            <person name="Chiu R."/>
            <person name="Doering T.L."/>
            <person name="Donlin M.J."/>
            <person name="D'Souza C.A."/>
            <person name="Fox D.S."/>
            <person name="Grinberg V."/>
            <person name="Fu J."/>
            <person name="Fukushima M."/>
            <person name="Haas B.J."/>
            <person name="Huang J.C."/>
            <person name="Janbon G."/>
            <person name="Jones S.J.M."/>
            <person name="Koo H.L."/>
            <person name="Krzywinski M.I."/>
            <person name="Kwon-Chung K.J."/>
            <person name="Lengeler K.B."/>
            <person name="Maiti R."/>
            <person name="Marra M.A."/>
            <person name="Marra R.E."/>
            <person name="Mathewson C.A."/>
            <person name="Mitchell T.G."/>
            <person name="Pertea M."/>
            <person name="Riggs F.R."/>
            <person name="Salzberg S.L."/>
            <person name="Schein J.E."/>
            <person name="Shvartsbeyn A."/>
            <person name="Shin H."/>
            <person name="Shumway M."/>
            <person name="Specht C.A."/>
            <person name="Suh B.B."/>
            <person name="Tenney A."/>
            <person name="Utterback T.R."/>
            <person name="Wickes B.L."/>
            <person name="Wortman J.R."/>
            <person name="Wye N.H."/>
            <person name="Kronstad J.W."/>
            <person name="Lodge J.K."/>
            <person name="Heitman J."/>
            <person name="Davis R.W."/>
            <person name="Fraser C.M."/>
            <person name="Hyman R.W."/>
        </authorList>
    </citation>
    <scope>NUCLEOTIDE SEQUENCE [LARGE SCALE GENOMIC DNA]</scope>
    <source>
        <strain>B-3501A</strain>
    </source>
</reference>
<evidence type="ECO:0000250" key="1">
    <source>
        <dbReference type="UniProtKB" id="Q06321"/>
    </source>
</evidence>
<evidence type="ECO:0000255" key="2"/>
<evidence type="ECO:0000255" key="3">
    <source>
        <dbReference type="PROSITE-ProRule" id="PRU00145"/>
    </source>
</evidence>
<evidence type="ECO:0000256" key="4">
    <source>
        <dbReference type="SAM" id="MobiDB-lite"/>
    </source>
</evidence>
<evidence type="ECO:0000305" key="5"/>
<sequence length="1585" mass="176690">MSPPISPTPPPLQPPFPPTAIARGPDRPDPPPQHQQAAESLVNAAAQHVAPTCPPTSDELPQMEDQATNSSNDSLIPSRQAPNQEETENAITAGTPPDEMEPTKDAQTVRFSSSSPASYSTHEYPTEEINEPRTSSRAPNTASSQMAESSFDFRSSRDIGSIRMGASALVSALNALPWEEDDDSDDGEDDDEFIEPARGSSSTIYERKQRPQTPSTSHGFHPTHTLHFPFRQNAIARRACQPGTTELDYQYATPETSSRRTSAAGSESSSEGEVPLPKGFVSHPNLIVPSGEGEAAAHPDPKLISDRITKEQQIADVEEQAEILRSAEEQEMRLGKEFVPPKSRDSADLNVDAALREGGSEREDVIEEQMQTNEAEKRLTRNEKLAERLMEVFGLEEREEVLEEMKCWLLRSVMLKGYMYLTKRHICFFANMPNENNLLVKSGPLHKKASRSKLNTKFWVVLKNDVLSWYESTSDPYFPKGNISLQYCHSCDAVSGTRFKVRTSERNYTFTADTESSRDEWVKAIQKVMFKTQHEGETIKLIIPLEAIVDVEKSPTLEFTETIEVKCIDAEDQMSVDSYFFASFPDNDYAFSAIQKLVRERPSPPELPRISSVTTIHANQEPLDTSHATIKRHGTDSSAEKLGMASHRPFRKISSVLKPLILKSSDGEPLEEHSQGPHHNDEDASHLPHIEAISNRRRSEEESDNDYFDGYPPRQVGPPPPSMNDDARNWRPSWIRKPASKLFGSSPSGSFVSHPGRLPTDSSTTVTESGPSLRSRTGRTKQASVTEVIEPPIQYEEEVSEDEMSNKPSVVDSNSAETARKRAARLSWTSETSSGSQMVKSKSDFSMLGSESGHSESAETVRKFRTFFALSDKEELIDHFPGYLYRVLPVSGRFFISTNYFCFRSSQLLYKTKESFRLMIIPIRDLYGLKAQKAFRFGHSGLTVVIKGHEEIFIEFRSASRRKACIALLEERMEAVRLSGENTIVDSHKIEARIMEDLDESTPVEPKSPWPVSPSPLFGSTTSTSFLEFKPEPMKITCLTIGSRGDVQPYIALCKGLQAEGHITKIATHGEYKAWVEGHGIAFESVGGDPAELMQMCVDNGMFTVSFLKEGLQKFRGWLDDLLNSSWEACQGSDLLIESPSAMSGIHVAEALRIPYYRAFTMPWTRTRAYPHAFAVPEHGRGGPYNYMTYTMFDQVFWRAISGQVNRWRRNVLGLDATTFDKMEQHKVPFLYNFSPTVVPPPLDWTEWIHVTGYWFLDKADEKQGEKSWTPPQGLVDFIDKAHGEEKKVVYIGFGSIVVSDPEEMTRCVVEAVVNSGVCAILSKGWSDRGSKKGEPKGDSEGADGVKYPPEIFAIDSIDHGWLFPRIDAACHHGGAGTTGASLRAGIPTIIKPFFGDQAFWAERVESLNVGSSIRRLTSHQLASALIKATTDEKQISKARVVGEMIRKENGITRAIEAIYRDLEYAKSIIKSLPSTDDRTPERISSLLHPLTTADLSFNRVRSRSRSRSRSSQGRFSPRRHTVDDDGWSVVSGGSRSRSGSASAVTSPERRPLNIGSALGSHVFKTALLPNTFGKWRNLEEGDDR</sequence>
<proteinExistence type="inferred from homology"/>
<feature type="chain" id="PRO_0000410100" description="Sterol 3-beta-glucosyltransferase">
    <location>
        <begin position="1"/>
        <end position="1585"/>
    </location>
</feature>
<feature type="domain" description="GRAM 1" evidence="2">
    <location>
        <begin position="387"/>
        <end position="555"/>
    </location>
</feature>
<feature type="domain" description="PH" evidence="3">
    <location>
        <begin position="438"/>
        <end position="530"/>
    </location>
</feature>
<feature type="domain" description="GRAM 2" evidence="2">
    <location>
        <begin position="862"/>
        <end position="933"/>
    </location>
</feature>
<feature type="region of interest" description="Disordered" evidence="4">
    <location>
        <begin position="1"/>
        <end position="151"/>
    </location>
</feature>
<feature type="region of interest" description="Disordered" evidence="4">
    <location>
        <begin position="177"/>
        <end position="225"/>
    </location>
</feature>
<feature type="region of interest" description="Disordered" evidence="4">
    <location>
        <begin position="249"/>
        <end position="279"/>
    </location>
</feature>
<feature type="region of interest" description="Disordered" evidence="4">
    <location>
        <begin position="625"/>
        <end position="645"/>
    </location>
</feature>
<feature type="region of interest" description="Disordered" evidence="4">
    <location>
        <begin position="666"/>
        <end position="852"/>
    </location>
</feature>
<feature type="region of interest" description="Disordered" evidence="4">
    <location>
        <begin position="1499"/>
        <end position="1552"/>
    </location>
</feature>
<feature type="compositionally biased region" description="Pro residues" evidence="4">
    <location>
        <begin position="1"/>
        <end position="18"/>
    </location>
</feature>
<feature type="compositionally biased region" description="Polar residues" evidence="4">
    <location>
        <begin position="65"/>
        <end position="92"/>
    </location>
</feature>
<feature type="compositionally biased region" description="Polar residues" evidence="4">
    <location>
        <begin position="105"/>
        <end position="123"/>
    </location>
</feature>
<feature type="compositionally biased region" description="Polar residues" evidence="4">
    <location>
        <begin position="132"/>
        <end position="148"/>
    </location>
</feature>
<feature type="compositionally biased region" description="Acidic residues" evidence="4">
    <location>
        <begin position="178"/>
        <end position="194"/>
    </location>
</feature>
<feature type="compositionally biased region" description="Low complexity" evidence="4">
    <location>
        <begin position="255"/>
        <end position="273"/>
    </location>
</feature>
<feature type="compositionally biased region" description="Basic and acidic residues" evidence="4">
    <location>
        <begin position="670"/>
        <end position="689"/>
    </location>
</feature>
<feature type="compositionally biased region" description="Polar residues" evidence="4">
    <location>
        <begin position="760"/>
        <end position="785"/>
    </location>
</feature>
<feature type="compositionally biased region" description="Polar residues" evidence="4">
    <location>
        <begin position="806"/>
        <end position="817"/>
    </location>
</feature>
<feature type="compositionally biased region" description="Polar residues" evidence="4">
    <location>
        <begin position="827"/>
        <end position="840"/>
    </location>
</feature>
<feature type="compositionally biased region" description="Low complexity" evidence="4">
    <location>
        <begin position="1529"/>
        <end position="1545"/>
    </location>
</feature>
<feature type="binding site" evidence="1">
    <location>
        <position position="1043"/>
    </location>
    <ligand>
        <name>UDP-alpha-D-glucose</name>
        <dbReference type="ChEBI" id="CHEBI:58885"/>
    </ligand>
</feature>
<feature type="binding site" evidence="1">
    <location>
        <position position="1044"/>
    </location>
    <ligand>
        <name>UDP-alpha-D-glucose</name>
        <dbReference type="ChEBI" id="CHEBI:58885"/>
    </ligand>
</feature>
<feature type="binding site" evidence="1">
    <location>
        <position position="1046"/>
    </location>
    <ligand>
        <name>UDP-alpha-D-glucose</name>
        <dbReference type="ChEBI" id="CHEBI:58885"/>
    </ligand>
</feature>
<feature type="binding site" evidence="1">
    <location>
        <position position="1358"/>
    </location>
    <ligand>
        <name>UDP-alpha-D-glucose</name>
        <dbReference type="ChEBI" id="CHEBI:58885"/>
    </ligand>
</feature>
<feature type="binding site" evidence="1">
    <location>
        <position position="1360"/>
    </location>
    <ligand>
        <name>UDP-alpha-D-glucose</name>
        <dbReference type="ChEBI" id="CHEBI:58885"/>
    </ligand>
</feature>
<feature type="binding site" evidence="1">
    <location>
        <position position="1373"/>
    </location>
    <ligand>
        <name>UDP-alpha-D-glucose</name>
        <dbReference type="ChEBI" id="CHEBI:58885"/>
    </ligand>
</feature>
<feature type="binding site" evidence="1">
    <location>
        <position position="1377"/>
    </location>
    <ligand>
        <name>UDP-alpha-D-glucose</name>
        <dbReference type="ChEBI" id="CHEBI:58885"/>
    </ligand>
</feature>
<feature type="binding site" evidence="1">
    <location>
        <position position="1378"/>
    </location>
    <ligand>
        <name>UDP-alpha-D-glucose</name>
        <dbReference type="ChEBI" id="CHEBI:58885"/>
    </ligand>
</feature>
<feature type="binding site" evidence="1">
    <location>
        <position position="1397"/>
    </location>
    <ligand>
        <name>UDP-alpha-D-glucose</name>
        <dbReference type="ChEBI" id="CHEBI:58885"/>
    </ligand>
</feature>
<feature type="binding site" evidence="1">
    <location>
        <position position="1398"/>
    </location>
    <ligand>
        <name>UDP-alpha-D-glucose</name>
        <dbReference type="ChEBI" id="CHEBI:58885"/>
    </ligand>
</feature>
<gene>
    <name evidence="1" type="primary">ATG26</name>
    <name type="ordered locus">CNBC2670</name>
</gene>
<organism>
    <name type="scientific">Cryptococcus neoformans var. neoformans serotype D (strain B-3501A)</name>
    <name type="common">Filobasidiella neoformans</name>
    <dbReference type="NCBI Taxonomy" id="283643"/>
    <lineage>
        <taxon>Eukaryota</taxon>
        <taxon>Fungi</taxon>
        <taxon>Dikarya</taxon>
        <taxon>Basidiomycota</taxon>
        <taxon>Agaricomycotina</taxon>
        <taxon>Tremellomycetes</taxon>
        <taxon>Tremellales</taxon>
        <taxon>Cryptococcaceae</taxon>
        <taxon>Cryptococcus</taxon>
        <taxon>Cryptococcus neoformans species complex</taxon>
    </lineage>
</organism>
<comment type="function">
    <text evidence="1">Sterol glycosyltransferase responsible for the glycosylation of ergosterol to form ergosterol-glucoside.</text>
</comment>
<comment type="catalytic activity">
    <reaction evidence="1">
        <text>a sterol + UDP-alpha-D-glucose = a sterol 3-beta-D-glucoside + UDP + H(+)</text>
        <dbReference type="Rhea" id="RHEA:22724"/>
        <dbReference type="ChEBI" id="CHEBI:15378"/>
        <dbReference type="ChEBI" id="CHEBI:15889"/>
        <dbReference type="ChEBI" id="CHEBI:37424"/>
        <dbReference type="ChEBI" id="CHEBI:58223"/>
        <dbReference type="ChEBI" id="CHEBI:58885"/>
        <dbReference type="EC" id="2.4.1.173"/>
    </reaction>
    <physiologicalReaction direction="left-to-right" evidence="1">
        <dbReference type="Rhea" id="RHEA:22725"/>
    </physiologicalReaction>
</comment>
<comment type="catalytic activity">
    <reaction evidence="1">
        <text>ergosterol + UDP-alpha-D-glucose = ergosteryl 3-beta-D-glucoside + UDP + H(+)</text>
        <dbReference type="Rhea" id="RHEA:61836"/>
        <dbReference type="ChEBI" id="CHEBI:15378"/>
        <dbReference type="ChEBI" id="CHEBI:16933"/>
        <dbReference type="ChEBI" id="CHEBI:52973"/>
        <dbReference type="ChEBI" id="CHEBI:58223"/>
        <dbReference type="ChEBI" id="CHEBI:58885"/>
    </reaction>
    <physiologicalReaction direction="left-to-right" evidence="1">
        <dbReference type="Rhea" id="RHEA:61837"/>
    </physiologicalReaction>
</comment>
<comment type="subcellular location">
    <subcellularLocation>
        <location evidence="1">Cytoplasm</location>
    </subcellularLocation>
    <subcellularLocation>
        <location evidence="1">Membrane</location>
        <topology evidence="1">Peripheral membrane protein</topology>
    </subcellularLocation>
</comment>
<comment type="similarity">
    <text evidence="5">Belongs to the glycosyltransferase 28 family.</text>
</comment>
<name>ATG26_CRYNB</name>
<keyword id="KW-0963">Cytoplasm</keyword>
<keyword id="KW-0328">Glycosyltransferase</keyword>
<keyword id="KW-0444">Lipid biosynthesis</keyword>
<keyword id="KW-0443">Lipid metabolism</keyword>
<keyword id="KW-0472">Membrane</keyword>
<keyword id="KW-0677">Repeat</keyword>
<keyword id="KW-0752">Steroid biosynthesis</keyword>
<keyword id="KW-0753">Steroid metabolism</keyword>
<keyword id="KW-0756">Sterol biosynthesis</keyword>
<keyword id="KW-1207">Sterol metabolism</keyword>
<keyword id="KW-0808">Transferase</keyword>
<accession>P0CN91</accession>
<accession>Q55W70</accession>
<accession>Q5KK25</accession>
<dbReference type="EC" id="2.4.1.-" evidence="1"/>
<dbReference type="EC" id="2.4.1.173" evidence="1"/>
<dbReference type="EMBL" id="AAEY01000013">
    <property type="protein sequence ID" value="EAL22129.1"/>
    <property type="molecule type" value="Genomic_DNA"/>
</dbReference>
<dbReference type="RefSeq" id="XP_776776.1">
    <property type="nucleotide sequence ID" value="XM_771683.1"/>
</dbReference>
<dbReference type="SMR" id="P0CN91"/>
<dbReference type="GeneID" id="4934932"/>
<dbReference type="KEGG" id="cnb:CNBC2670"/>
<dbReference type="VEuPathDB" id="FungiDB:CNBC2670"/>
<dbReference type="HOGENOM" id="CLU_000537_6_0_1"/>
<dbReference type="OrthoDB" id="5693at5206"/>
<dbReference type="PHI-base" id="PHI:10018"/>
<dbReference type="GO" id="GO:0005737">
    <property type="term" value="C:cytoplasm"/>
    <property type="evidence" value="ECO:0007669"/>
    <property type="project" value="UniProtKB-SubCell"/>
</dbReference>
<dbReference type="GO" id="GO:0016020">
    <property type="term" value="C:membrane"/>
    <property type="evidence" value="ECO:0007669"/>
    <property type="project" value="UniProtKB-SubCell"/>
</dbReference>
<dbReference type="GO" id="GO:0016906">
    <property type="term" value="F:sterol 3-beta-glucosyltransferase activity"/>
    <property type="evidence" value="ECO:0007669"/>
    <property type="project" value="UniProtKB-EC"/>
</dbReference>
<dbReference type="GO" id="GO:0005975">
    <property type="term" value="P:carbohydrate metabolic process"/>
    <property type="evidence" value="ECO:0007669"/>
    <property type="project" value="InterPro"/>
</dbReference>
<dbReference type="GO" id="GO:0030259">
    <property type="term" value="P:lipid glycosylation"/>
    <property type="evidence" value="ECO:0007669"/>
    <property type="project" value="InterPro"/>
</dbReference>
<dbReference type="GO" id="GO:0016126">
    <property type="term" value="P:sterol biosynthetic process"/>
    <property type="evidence" value="ECO:0007669"/>
    <property type="project" value="UniProtKB-KW"/>
</dbReference>
<dbReference type="CDD" id="cd03784">
    <property type="entry name" value="GT1_Gtf-like"/>
    <property type="match status" value="1"/>
</dbReference>
<dbReference type="CDD" id="cd13215">
    <property type="entry name" value="PH-GRAM1_AGT26"/>
    <property type="match status" value="1"/>
</dbReference>
<dbReference type="CDD" id="cd13216">
    <property type="entry name" value="PH-GRAM2_AGT26"/>
    <property type="match status" value="1"/>
</dbReference>
<dbReference type="FunFam" id="2.30.29.30:FF:000303">
    <property type="entry name" value="Sterol 3-beta-glucosyltransferase"/>
    <property type="match status" value="1"/>
</dbReference>
<dbReference type="FunFam" id="2.30.29.30:FF:000606">
    <property type="entry name" value="Sterol 3-beta-glucosyltransferase"/>
    <property type="match status" value="1"/>
</dbReference>
<dbReference type="FunFam" id="3.40.50.2000:FF:000029">
    <property type="entry name" value="Sterol 3-beta-glucosyltransferase"/>
    <property type="match status" value="1"/>
</dbReference>
<dbReference type="FunFam" id="3.40.50.2000:FF:000009">
    <property type="entry name" value="Sterol 3-beta-glucosyltransferase UGT80A2"/>
    <property type="match status" value="1"/>
</dbReference>
<dbReference type="Gene3D" id="3.40.50.2000">
    <property type="entry name" value="Glycogen Phosphorylase B"/>
    <property type="match status" value="2"/>
</dbReference>
<dbReference type="Gene3D" id="2.30.29.30">
    <property type="entry name" value="Pleckstrin-homology domain (PH domain)/Phosphotyrosine-binding domain (PTB)"/>
    <property type="match status" value="2"/>
</dbReference>
<dbReference type="InterPro" id="IPR048066">
    <property type="entry name" value="ATG26_PH_GRAM1"/>
</dbReference>
<dbReference type="InterPro" id="IPR048065">
    <property type="entry name" value="ATG26_PH_GRAM2"/>
</dbReference>
<dbReference type="InterPro" id="IPR010610">
    <property type="entry name" value="EryCIII-like_C"/>
</dbReference>
<dbReference type="InterPro" id="IPR050426">
    <property type="entry name" value="Glycosyltransferase_28"/>
</dbReference>
<dbReference type="InterPro" id="IPR004276">
    <property type="entry name" value="GlycoTrans_28_N"/>
</dbReference>
<dbReference type="InterPro" id="IPR004182">
    <property type="entry name" value="GRAM"/>
</dbReference>
<dbReference type="InterPro" id="IPR011993">
    <property type="entry name" value="PH-like_dom_sf"/>
</dbReference>
<dbReference type="InterPro" id="IPR001849">
    <property type="entry name" value="PH_domain"/>
</dbReference>
<dbReference type="InterPro" id="IPR002213">
    <property type="entry name" value="UDP_glucos_trans"/>
</dbReference>
<dbReference type="PANTHER" id="PTHR48050">
    <property type="entry name" value="STEROL 3-BETA-GLUCOSYLTRANSFERASE"/>
    <property type="match status" value="1"/>
</dbReference>
<dbReference type="PANTHER" id="PTHR48050:SF25">
    <property type="entry name" value="STEROL 3-BETA-GLUCOSYLTRANSFERASE"/>
    <property type="match status" value="1"/>
</dbReference>
<dbReference type="Pfam" id="PF06722">
    <property type="entry name" value="EryCIII-like_C"/>
    <property type="match status" value="1"/>
</dbReference>
<dbReference type="Pfam" id="PF03033">
    <property type="entry name" value="Glyco_transf_28"/>
    <property type="match status" value="1"/>
</dbReference>
<dbReference type="Pfam" id="PF02893">
    <property type="entry name" value="GRAM"/>
    <property type="match status" value="2"/>
</dbReference>
<dbReference type="Pfam" id="PF00169">
    <property type="entry name" value="PH"/>
    <property type="match status" value="1"/>
</dbReference>
<dbReference type="SMART" id="SM00568">
    <property type="entry name" value="GRAM"/>
    <property type="match status" value="2"/>
</dbReference>
<dbReference type="SMART" id="SM00233">
    <property type="entry name" value="PH"/>
    <property type="match status" value="1"/>
</dbReference>
<dbReference type="SUPFAM" id="SSF50729">
    <property type="entry name" value="PH domain-like"/>
    <property type="match status" value="1"/>
</dbReference>
<dbReference type="SUPFAM" id="SSF53756">
    <property type="entry name" value="UDP-Glycosyltransferase/glycogen phosphorylase"/>
    <property type="match status" value="1"/>
</dbReference>
<dbReference type="PROSITE" id="PS50003">
    <property type="entry name" value="PH_DOMAIN"/>
    <property type="match status" value="1"/>
</dbReference>